<dbReference type="EMBL" id="D00326">
    <property type="protein sequence ID" value="BAA00238.1"/>
    <property type="molecule type" value="Genomic_RNA"/>
</dbReference>
<dbReference type="PIR" id="JS0249">
    <property type="entry name" value="VPXRGT"/>
</dbReference>
<dbReference type="SMR" id="P16593"/>
<dbReference type="GO" id="GO:0019031">
    <property type="term" value="C:viral envelope"/>
    <property type="evidence" value="ECO:0007669"/>
    <property type="project" value="UniProtKB-UniRule"/>
</dbReference>
<dbReference type="GO" id="GO:0039626">
    <property type="term" value="C:viral intermediate capsid"/>
    <property type="evidence" value="ECO:0007669"/>
    <property type="project" value="UniProtKB-UniRule"/>
</dbReference>
<dbReference type="GO" id="GO:0046789">
    <property type="term" value="F:host cell surface receptor binding"/>
    <property type="evidence" value="ECO:0007669"/>
    <property type="project" value="UniProtKB-UniRule"/>
</dbReference>
<dbReference type="GO" id="GO:0046872">
    <property type="term" value="F:metal ion binding"/>
    <property type="evidence" value="ECO:0007669"/>
    <property type="project" value="UniProtKB-UniRule"/>
</dbReference>
<dbReference type="GO" id="GO:0005198">
    <property type="term" value="F:structural molecule activity"/>
    <property type="evidence" value="ECO:0007669"/>
    <property type="project" value="UniProtKB-UniRule"/>
</dbReference>
<dbReference type="GO" id="GO:0019064">
    <property type="term" value="P:fusion of virus membrane with host plasma membrane"/>
    <property type="evidence" value="ECO:0007669"/>
    <property type="project" value="UniProtKB-UniRule"/>
</dbReference>
<dbReference type="FunFam" id="2.60.120.170:FF:000001">
    <property type="entry name" value="Intermediate capsid protein VP6"/>
    <property type="match status" value="1"/>
</dbReference>
<dbReference type="Gene3D" id="2.60.120.170">
    <property type="match status" value="1"/>
</dbReference>
<dbReference type="Gene3D" id="1.10.1350.10">
    <property type="entry name" value="Viral capsid alpha domain"/>
    <property type="match status" value="1"/>
</dbReference>
<dbReference type="HAMAP" id="MF_04126">
    <property type="entry name" value="Rota_VP6"/>
    <property type="match status" value="1"/>
</dbReference>
<dbReference type="HAMAP" id="MF_04129">
    <property type="entry name" value="Rota_VP6_A"/>
    <property type="match status" value="1"/>
</dbReference>
<dbReference type="InterPro" id="IPR008980">
    <property type="entry name" value="Capsid_hemagglutn"/>
</dbReference>
<dbReference type="InterPro" id="IPR001385">
    <property type="entry name" value="Rotavirus_A/C_VP6"/>
</dbReference>
<dbReference type="InterPro" id="IPR008935">
    <property type="entry name" value="Virus_capsid_a-hlx_vir"/>
</dbReference>
<dbReference type="Pfam" id="PF00980">
    <property type="entry name" value="Rota_Capsid_VP6"/>
    <property type="match status" value="1"/>
</dbReference>
<dbReference type="SUPFAM" id="SSF48345">
    <property type="entry name" value="A virus capsid protein alpha-helical domain"/>
    <property type="match status" value="1"/>
</dbReference>
<dbReference type="SUPFAM" id="SSF49818">
    <property type="entry name" value="Viral protein domain"/>
    <property type="match status" value="1"/>
</dbReference>
<keyword id="KW-0106">Calcium</keyword>
<keyword id="KW-0167">Capsid protein</keyword>
<keyword id="KW-1154">Intermediate capsid protein</keyword>
<keyword id="KW-0479">Metal-binding</keyword>
<keyword id="KW-0832">Ubl conjugation</keyword>
<keyword id="KW-0946">Virion</keyword>
<keyword id="KW-0862">Zinc</keyword>
<evidence type="ECO:0000255" key="1">
    <source>
        <dbReference type="HAMAP-Rule" id="MF_04129"/>
    </source>
</evidence>
<sequence>MEVLYSLSKTLKDARDKIVEGTLYSNVSDLIQQFNQMIVTMNGNDFQTGGIGNLPVRNWTFDFGLLGTTLLNLDANYVETARTTIEYFIDFIDNVCMDEMARESQRNGIAPQSEAFRKLAGIKFKRINFDNSSEYIENWNLQNRRQRTGFIFHKPNIFPYSASFTLNRSQPMHDNLMGTMWLNAGSEIQVAGFDYSCAINAPANIQQFEHIVQLRRALTTATITLLPDAERFSFPRVINSADGATTWFFNPVILRPNNVEVEFLLNGQIINTYQARFGTIVARNFDTIRLSFQLMRPPNMTPAVDALFPQAQPFQHHATVGLTLRIESAVCESVLADANETLLANVTAVRQEYAIPVGPVFPPGMNWTELITNYSPSREDNLQRVFTVASIRSMLIK</sequence>
<organism>
    <name type="scientific">Rotavirus A (strain RVA/Pig/United States/Gottfried/1983/G4P2B[6])</name>
    <name type="common">RV-A</name>
    <dbReference type="NCBI Taxonomy" id="10917"/>
    <lineage>
        <taxon>Viruses</taxon>
        <taxon>Riboviria</taxon>
        <taxon>Orthornavirae</taxon>
        <taxon>Duplornaviricota</taxon>
        <taxon>Resentoviricetes</taxon>
        <taxon>Reovirales</taxon>
        <taxon>Sedoreoviridae</taxon>
        <taxon>Rotavirus</taxon>
        <taxon>Rotavirus A</taxon>
    </lineage>
</organism>
<proteinExistence type="inferred from homology"/>
<feature type="chain" id="PRO_0000149575" description="Intermediate capsid protein VP6">
    <location>
        <begin position="1"/>
        <end position="397"/>
    </location>
</feature>
<feature type="region of interest" description="Interaction with the inner capsid protein VP2" evidence="1">
    <location>
        <begin position="62"/>
        <end position="73"/>
    </location>
</feature>
<feature type="binding site" evidence="1">
    <location>
        <position position="153"/>
    </location>
    <ligand>
        <name>Zn(2+)</name>
        <dbReference type="ChEBI" id="CHEBI:29105"/>
        <note>ligand shared between all trimeric partners</note>
    </ligand>
</feature>
<feature type="binding site" evidence="1">
    <location>
        <position position="266"/>
    </location>
    <ligand>
        <name>Ca(2+)</name>
        <dbReference type="ChEBI" id="CHEBI:29108"/>
    </ligand>
</feature>
<feature type="binding site" evidence="1">
    <location>
        <position position="286"/>
    </location>
    <ligand>
        <name>Ca(2+)</name>
        <dbReference type="ChEBI" id="CHEBI:29108"/>
    </ligand>
</feature>
<organismHost>
    <name type="scientific">Sus scrofa</name>
    <name type="common">Pig</name>
    <dbReference type="NCBI Taxonomy" id="9823"/>
</organismHost>
<accession>P16593</accession>
<protein>
    <recommendedName>
        <fullName evidence="1">Intermediate capsid protein VP6</fullName>
    </recommendedName>
</protein>
<reference key="1">
    <citation type="journal article" date="1988" name="J. Gen. Virol.">
        <title>Comparative sequence analysis of the genomic segment 6 of four rotaviruses each with a different subgroup specificity.</title>
        <authorList>
            <person name="Gorziglia M."/>
            <person name="Hoshino Y."/>
            <person name="Nishikawa K."/>
            <person name="Maloy W.L."/>
            <person name="Jones R.W."/>
            <person name="Kapikian A.Z."/>
            <person name="Chanock R.M."/>
        </authorList>
    </citation>
    <scope>NUCLEOTIDE SEQUENCE [GENOMIC RNA]</scope>
</reference>
<comment type="function">
    <text evidence="1">Intermediate capsid protein that self assembles to form an icosahedral capsid with a T=13 symmetry, which consists of 230 trimers of VP6, with channels at each of its five-fold vertices. This capsid constitutes the middle concentric layer of the viral mature particle. The innermost VP2 capsid and the intermediate VP6 capsid remain intact following cell entry to protect the dsRNA from degradation and to prevent unfavorable antiviral responses in the host cell during all the replication cycle of the virus. Nascent transcripts are transcribed within the structural confines of this double-layered particle (DLP) and are extruded through the channels at the five-fold axes. VP6 is required for the transcription activity of the DLP.</text>
</comment>
<comment type="subunit">
    <text evidence="1">Homotrimer. Interacts with the inner capsid protein VP2. Interacts with the outer capsid glycoprotein VP7. Interacts with the outer capsid protein VP5*.</text>
</comment>
<comment type="subcellular location">
    <subcellularLocation>
        <location evidence="1">Virion</location>
    </subcellularLocation>
    <text evidence="1">Component of the intermediate capsid. Also found in spherical cytoplasmic structures, called virus factories, that appear early after infection and are the site of viral replication and packaging.</text>
</comment>
<comment type="PTM">
    <text evidence="1">The N-terminus is blocked.</text>
</comment>
<comment type="PTM">
    <text evidence="1">Sumoylated with SUMO1 and SUMO2. Sumoylation of viral proteins seems to have a positive role on viral replication.</text>
</comment>
<comment type="miscellaneous">
    <text evidence="1">The VP6 trimer contains a zinc ion located at the center of the molecule. The zinc ion is not essential for either trimerization or transcription activity of the DLP. Zinc-depleted VP6 has an increased sensitivity to proteases.</text>
</comment>
<comment type="similarity">
    <text evidence="1">Belongs to the rotavirus VP6 family.</text>
</comment>
<name>VP6_ROTPG</name>